<proteinExistence type="inferred from homology"/>
<gene>
    <name evidence="1" type="primary">fabH</name>
    <name type="ordered locus">TTE1475</name>
</gene>
<dbReference type="EC" id="2.3.1.180" evidence="1"/>
<dbReference type="EMBL" id="AE008691">
    <property type="protein sequence ID" value="AAM24697.1"/>
    <property type="molecule type" value="Genomic_DNA"/>
</dbReference>
<dbReference type="RefSeq" id="WP_011025742.1">
    <property type="nucleotide sequence ID" value="NZ_JANUCV010000001.1"/>
</dbReference>
<dbReference type="SMR" id="Q8R9V7"/>
<dbReference type="STRING" id="273068.TTE1475"/>
<dbReference type="KEGG" id="tte:TTE1475"/>
<dbReference type="eggNOG" id="COG0332">
    <property type="taxonomic scope" value="Bacteria"/>
</dbReference>
<dbReference type="HOGENOM" id="CLU_039592_3_1_9"/>
<dbReference type="OrthoDB" id="9815506at2"/>
<dbReference type="UniPathway" id="UPA00094"/>
<dbReference type="Proteomes" id="UP000000555">
    <property type="component" value="Chromosome"/>
</dbReference>
<dbReference type="GO" id="GO:0005737">
    <property type="term" value="C:cytoplasm"/>
    <property type="evidence" value="ECO:0007669"/>
    <property type="project" value="UniProtKB-SubCell"/>
</dbReference>
<dbReference type="GO" id="GO:0004315">
    <property type="term" value="F:3-oxoacyl-[acyl-carrier-protein] synthase activity"/>
    <property type="evidence" value="ECO:0007669"/>
    <property type="project" value="InterPro"/>
</dbReference>
<dbReference type="GO" id="GO:0033818">
    <property type="term" value="F:beta-ketoacyl-acyl-carrier-protein synthase III activity"/>
    <property type="evidence" value="ECO:0007669"/>
    <property type="project" value="UniProtKB-UniRule"/>
</dbReference>
<dbReference type="GO" id="GO:0006633">
    <property type="term" value="P:fatty acid biosynthetic process"/>
    <property type="evidence" value="ECO:0007669"/>
    <property type="project" value="UniProtKB-UniRule"/>
</dbReference>
<dbReference type="CDD" id="cd00830">
    <property type="entry name" value="KAS_III"/>
    <property type="match status" value="1"/>
</dbReference>
<dbReference type="FunFam" id="3.40.47.10:FF:000004">
    <property type="entry name" value="3-oxoacyl-[acyl-carrier-protein] synthase 3"/>
    <property type="match status" value="1"/>
</dbReference>
<dbReference type="Gene3D" id="3.40.47.10">
    <property type="match status" value="1"/>
</dbReference>
<dbReference type="HAMAP" id="MF_01815">
    <property type="entry name" value="FabH"/>
    <property type="match status" value="1"/>
</dbReference>
<dbReference type="InterPro" id="IPR013747">
    <property type="entry name" value="ACP_syn_III_C"/>
</dbReference>
<dbReference type="InterPro" id="IPR013751">
    <property type="entry name" value="ACP_syn_III_N"/>
</dbReference>
<dbReference type="InterPro" id="IPR004655">
    <property type="entry name" value="FabH"/>
</dbReference>
<dbReference type="InterPro" id="IPR016039">
    <property type="entry name" value="Thiolase-like"/>
</dbReference>
<dbReference type="NCBIfam" id="TIGR00747">
    <property type="entry name" value="fabH"/>
    <property type="match status" value="1"/>
</dbReference>
<dbReference type="NCBIfam" id="NF006829">
    <property type="entry name" value="PRK09352.1"/>
    <property type="match status" value="1"/>
</dbReference>
<dbReference type="PANTHER" id="PTHR43091">
    <property type="entry name" value="3-OXOACYL-[ACYL-CARRIER-PROTEIN] SYNTHASE"/>
    <property type="match status" value="1"/>
</dbReference>
<dbReference type="PANTHER" id="PTHR43091:SF1">
    <property type="entry name" value="BETA-KETOACYL-[ACYL-CARRIER-PROTEIN] SYNTHASE III, CHLOROPLASTIC"/>
    <property type="match status" value="1"/>
</dbReference>
<dbReference type="Pfam" id="PF08545">
    <property type="entry name" value="ACP_syn_III"/>
    <property type="match status" value="1"/>
</dbReference>
<dbReference type="Pfam" id="PF08541">
    <property type="entry name" value="ACP_syn_III_C"/>
    <property type="match status" value="1"/>
</dbReference>
<dbReference type="SUPFAM" id="SSF53901">
    <property type="entry name" value="Thiolase-like"/>
    <property type="match status" value="1"/>
</dbReference>
<reference key="1">
    <citation type="journal article" date="2002" name="Genome Res.">
        <title>A complete sequence of the T. tengcongensis genome.</title>
        <authorList>
            <person name="Bao Q."/>
            <person name="Tian Y."/>
            <person name="Li W."/>
            <person name="Xu Z."/>
            <person name="Xuan Z."/>
            <person name="Hu S."/>
            <person name="Dong W."/>
            <person name="Yang J."/>
            <person name="Chen Y."/>
            <person name="Xue Y."/>
            <person name="Xu Y."/>
            <person name="Lai X."/>
            <person name="Huang L."/>
            <person name="Dong X."/>
            <person name="Ma Y."/>
            <person name="Ling L."/>
            <person name="Tan H."/>
            <person name="Chen R."/>
            <person name="Wang J."/>
            <person name="Yu J."/>
            <person name="Yang H."/>
        </authorList>
    </citation>
    <scope>NUCLEOTIDE SEQUENCE [LARGE SCALE GENOMIC DNA]</scope>
    <source>
        <strain>DSM 15242 / JCM 11007 / NBRC 100824 / MB4</strain>
    </source>
</reference>
<organism>
    <name type="scientific">Caldanaerobacter subterraneus subsp. tengcongensis (strain DSM 15242 / JCM 11007 / NBRC 100824 / MB4)</name>
    <name type="common">Thermoanaerobacter tengcongensis</name>
    <dbReference type="NCBI Taxonomy" id="273068"/>
    <lineage>
        <taxon>Bacteria</taxon>
        <taxon>Bacillati</taxon>
        <taxon>Bacillota</taxon>
        <taxon>Clostridia</taxon>
        <taxon>Thermoanaerobacterales</taxon>
        <taxon>Thermoanaerobacteraceae</taxon>
        <taxon>Caldanaerobacter</taxon>
    </lineage>
</organism>
<accession>Q8R9V7</accession>
<protein>
    <recommendedName>
        <fullName evidence="1">Beta-ketoacyl-[acyl-carrier-protein] synthase III</fullName>
        <shortName evidence="1">Beta-ketoacyl-ACP synthase III</shortName>
        <shortName evidence="1">KAS III</shortName>
        <ecNumber evidence="1">2.3.1.180</ecNumber>
    </recommendedName>
    <alternativeName>
        <fullName evidence="1">3-oxoacyl-[acyl-carrier-protein] synthase 3</fullName>
    </alternativeName>
    <alternativeName>
        <fullName evidence="1">3-oxoacyl-[acyl-carrier-protein] synthase III</fullName>
    </alternativeName>
</protein>
<evidence type="ECO:0000255" key="1">
    <source>
        <dbReference type="HAMAP-Rule" id="MF_01815"/>
    </source>
</evidence>
<sequence>MCEKIAAGILGTGSYLPEKILTNFDLEKMVDTSDEWITTRTGIKERRIADPSQATSDLATEASKRALEDANLKPEDLDMIIVATVTPDMNFPSTACIVQANLGALNAAAFDISVGCSGFIYGLAIAQQFVETGMYRNVLVIGAETLSKIINWKDRNTCVLFGDGAGAAVVGRVESGYGILGSYLGADGTGGKYLYMPAGGSRMPASHETVEKNLHTIFMEGQEVFKFAVKVMDSATIEVLERCGLTPEDIDMLIPHQANTRIIEAARKRLKLTNDKVYINLDKYGNTSAASVAIALDEAYRKGLIKKGDIILTVAFGAGLTWASSVIKWSK</sequence>
<keyword id="KW-0012">Acyltransferase</keyword>
<keyword id="KW-0963">Cytoplasm</keyword>
<keyword id="KW-0275">Fatty acid biosynthesis</keyword>
<keyword id="KW-0276">Fatty acid metabolism</keyword>
<keyword id="KW-0444">Lipid biosynthesis</keyword>
<keyword id="KW-0443">Lipid metabolism</keyword>
<keyword id="KW-0511">Multifunctional enzyme</keyword>
<keyword id="KW-1185">Reference proteome</keyword>
<keyword id="KW-0808">Transferase</keyword>
<feature type="chain" id="PRO_0000110499" description="Beta-ketoacyl-[acyl-carrier-protein] synthase III">
    <location>
        <begin position="1"/>
        <end position="331"/>
    </location>
</feature>
<feature type="region of interest" description="ACP-binding" evidence="1">
    <location>
        <begin position="257"/>
        <end position="261"/>
    </location>
</feature>
<feature type="active site" evidence="1">
    <location>
        <position position="116"/>
    </location>
</feature>
<feature type="active site" evidence="1">
    <location>
        <position position="256"/>
    </location>
</feature>
<feature type="active site" evidence="1">
    <location>
        <position position="286"/>
    </location>
</feature>
<name>FABH_CALS4</name>
<comment type="function">
    <text evidence="1">Catalyzes the condensation reaction of fatty acid synthesis by the addition to an acyl acceptor of two carbons from malonyl-ACP. Catalyzes the first condensation reaction which initiates fatty acid synthesis and may therefore play a role in governing the total rate of fatty acid production. Possesses both acetoacetyl-ACP synthase and acetyl transacylase activities. Its substrate specificity determines the biosynthesis of branched-chain and/or straight-chain of fatty acids.</text>
</comment>
<comment type="catalytic activity">
    <reaction evidence="1">
        <text>malonyl-[ACP] + acetyl-CoA + H(+) = 3-oxobutanoyl-[ACP] + CO2 + CoA</text>
        <dbReference type="Rhea" id="RHEA:12080"/>
        <dbReference type="Rhea" id="RHEA-COMP:9623"/>
        <dbReference type="Rhea" id="RHEA-COMP:9625"/>
        <dbReference type="ChEBI" id="CHEBI:15378"/>
        <dbReference type="ChEBI" id="CHEBI:16526"/>
        <dbReference type="ChEBI" id="CHEBI:57287"/>
        <dbReference type="ChEBI" id="CHEBI:57288"/>
        <dbReference type="ChEBI" id="CHEBI:78449"/>
        <dbReference type="ChEBI" id="CHEBI:78450"/>
        <dbReference type="EC" id="2.3.1.180"/>
    </reaction>
</comment>
<comment type="pathway">
    <text evidence="1">Lipid metabolism; fatty acid biosynthesis.</text>
</comment>
<comment type="subunit">
    <text evidence="1">Homodimer.</text>
</comment>
<comment type="subcellular location">
    <subcellularLocation>
        <location evidence="1">Cytoplasm</location>
    </subcellularLocation>
</comment>
<comment type="domain">
    <text evidence="1">The last Arg residue of the ACP-binding site is essential for the weak association between ACP/AcpP and FabH.</text>
</comment>
<comment type="similarity">
    <text evidence="1">Belongs to the thiolase-like superfamily. FabH family.</text>
</comment>